<name>PRSA2_LISMO</name>
<dbReference type="EC" id="5.2.1.8"/>
<dbReference type="EMBL" id="AL591982">
    <property type="protein sequence ID" value="CAD00297.1"/>
    <property type="molecule type" value="Genomic_DNA"/>
</dbReference>
<dbReference type="PIR" id="AC1352">
    <property type="entry name" value="AC1352"/>
</dbReference>
<dbReference type="RefSeq" id="NP_465743.1">
    <property type="nucleotide sequence ID" value="NC_003210.1"/>
</dbReference>
<dbReference type="RefSeq" id="WP_010989927.1">
    <property type="nucleotide sequence ID" value="NZ_CP149495.1"/>
</dbReference>
<dbReference type="SMR" id="Q8Y557"/>
<dbReference type="STRING" id="169963.gene:17594910"/>
<dbReference type="PaxDb" id="169963-lmo2219"/>
<dbReference type="EnsemblBacteria" id="CAD00297">
    <property type="protein sequence ID" value="CAD00297"/>
    <property type="gene ID" value="CAD00297"/>
</dbReference>
<dbReference type="GeneID" id="984626"/>
<dbReference type="KEGG" id="lmo:lmo2219"/>
<dbReference type="PATRIC" id="fig|169963.11.peg.2271"/>
<dbReference type="eggNOG" id="COG0760">
    <property type="taxonomic scope" value="Bacteria"/>
</dbReference>
<dbReference type="HOGENOM" id="CLU_034646_6_1_9"/>
<dbReference type="OrthoDB" id="14196at2"/>
<dbReference type="PhylomeDB" id="Q8Y557"/>
<dbReference type="BioCyc" id="LMON169963:LMO2219-MONOMER"/>
<dbReference type="PHI-base" id="PHI:123454"/>
<dbReference type="PHI-base" id="PHI:6413"/>
<dbReference type="Proteomes" id="UP000000817">
    <property type="component" value="Chromosome"/>
</dbReference>
<dbReference type="GO" id="GO:0005886">
    <property type="term" value="C:plasma membrane"/>
    <property type="evidence" value="ECO:0007669"/>
    <property type="project" value="UniProtKB-SubCell"/>
</dbReference>
<dbReference type="GO" id="GO:0003755">
    <property type="term" value="F:peptidyl-prolyl cis-trans isomerase activity"/>
    <property type="evidence" value="ECO:0007669"/>
    <property type="project" value="UniProtKB-UniRule"/>
</dbReference>
<dbReference type="GO" id="GO:0006457">
    <property type="term" value="P:protein folding"/>
    <property type="evidence" value="ECO:0007669"/>
    <property type="project" value="UniProtKB-UniRule"/>
</dbReference>
<dbReference type="FunFam" id="3.10.50.40:FF:000042">
    <property type="entry name" value="Foldase protein PrsA"/>
    <property type="match status" value="1"/>
</dbReference>
<dbReference type="Gene3D" id="3.10.50.40">
    <property type="match status" value="1"/>
</dbReference>
<dbReference type="Gene3D" id="1.10.4030.10">
    <property type="entry name" value="Porin chaperone SurA, peptide-binding domain"/>
    <property type="match status" value="1"/>
</dbReference>
<dbReference type="HAMAP" id="MF_01145">
    <property type="entry name" value="Foldase_PrsA"/>
    <property type="match status" value="1"/>
</dbReference>
<dbReference type="InterPro" id="IPR023059">
    <property type="entry name" value="Foldase_PrsA"/>
</dbReference>
<dbReference type="InterPro" id="IPR046357">
    <property type="entry name" value="PPIase_dom_sf"/>
</dbReference>
<dbReference type="InterPro" id="IPR000297">
    <property type="entry name" value="PPIase_PpiC"/>
</dbReference>
<dbReference type="InterPro" id="IPR050245">
    <property type="entry name" value="PrsA_foldase"/>
</dbReference>
<dbReference type="InterPro" id="IPR027304">
    <property type="entry name" value="Trigger_fact/SurA_dom_sf"/>
</dbReference>
<dbReference type="PANTHER" id="PTHR47245:SF1">
    <property type="entry name" value="FOLDASE PROTEIN PRSA"/>
    <property type="match status" value="1"/>
</dbReference>
<dbReference type="PANTHER" id="PTHR47245">
    <property type="entry name" value="PEPTIDYLPROLYL ISOMERASE"/>
    <property type="match status" value="1"/>
</dbReference>
<dbReference type="Pfam" id="PF13616">
    <property type="entry name" value="Rotamase_3"/>
    <property type="match status" value="1"/>
</dbReference>
<dbReference type="SUPFAM" id="SSF54534">
    <property type="entry name" value="FKBP-like"/>
    <property type="match status" value="1"/>
</dbReference>
<dbReference type="SUPFAM" id="SSF109998">
    <property type="entry name" value="Triger factor/SurA peptide-binding domain-like"/>
    <property type="match status" value="1"/>
</dbReference>
<dbReference type="PROSITE" id="PS50198">
    <property type="entry name" value="PPIC_PPIASE_2"/>
    <property type="match status" value="1"/>
</dbReference>
<dbReference type="PROSITE" id="PS51257">
    <property type="entry name" value="PROKAR_LIPOPROTEIN"/>
    <property type="match status" value="1"/>
</dbReference>
<organism>
    <name type="scientific">Listeria monocytogenes serovar 1/2a (strain ATCC BAA-679 / EGD-e)</name>
    <dbReference type="NCBI Taxonomy" id="169963"/>
    <lineage>
        <taxon>Bacteria</taxon>
        <taxon>Bacillati</taxon>
        <taxon>Bacillota</taxon>
        <taxon>Bacilli</taxon>
        <taxon>Bacillales</taxon>
        <taxon>Listeriaceae</taxon>
        <taxon>Listeria</taxon>
    </lineage>
</organism>
<keyword id="KW-1003">Cell membrane</keyword>
<keyword id="KW-0413">Isomerase</keyword>
<keyword id="KW-0449">Lipoprotein</keyword>
<keyword id="KW-0472">Membrane</keyword>
<keyword id="KW-0564">Palmitate</keyword>
<keyword id="KW-1185">Reference proteome</keyword>
<keyword id="KW-0697">Rotamase</keyword>
<keyword id="KW-0732">Signal</keyword>
<protein>
    <recommendedName>
        <fullName>Foldase protein PrsA 2</fullName>
        <ecNumber>5.2.1.8</ecNumber>
    </recommendedName>
</protein>
<sequence length="293" mass="32698">MKKKLILGLVMMMALFSLAACGGGGDVVKTDSGDVTKDELYDAMKDKYGSEFVQQLTFEKILGDKYKVSDEDVDKKFNEYKSQYGDQFSAVLTQSGLTEKSFKSQLKYNLLVQKATEANTDTSDKTLKKYYETWQPDITVSHILVADENKAKEVEQKLKDGEKFADLAKEYSTDTATKDNGGQLAPFGPGKMDPAFEKAAYALKNKGDISAPVKTQYGYHIIQMDKPATKTTFEKDKKAVKASYLESQLTTENMQKTLKKEYKDANVKVEDKDLKDAFKDFDGSSSSDSDSSK</sequence>
<evidence type="ECO:0000250" key="1"/>
<evidence type="ECO:0000255" key="2"/>
<evidence type="ECO:0000305" key="3"/>
<proteinExistence type="inferred from homology"/>
<comment type="function">
    <text evidence="1">Plays a major role in protein secretion by helping the post-translocational extracellular folding of several secreted proteins.</text>
</comment>
<comment type="catalytic activity">
    <reaction>
        <text>[protein]-peptidylproline (omega=180) = [protein]-peptidylproline (omega=0)</text>
        <dbReference type="Rhea" id="RHEA:16237"/>
        <dbReference type="Rhea" id="RHEA-COMP:10747"/>
        <dbReference type="Rhea" id="RHEA-COMP:10748"/>
        <dbReference type="ChEBI" id="CHEBI:83833"/>
        <dbReference type="ChEBI" id="CHEBI:83834"/>
        <dbReference type="EC" id="5.2.1.8"/>
    </reaction>
</comment>
<comment type="subcellular location">
    <subcellularLocation>
        <location evidence="3">Cell membrane</location>
        <topology evidence="3">Lipid-anchor</topology>
    </subcellularLocation>
</comment>
<comment type="similarity">
    <text evidence="3">Belongs to the PrsA family.</text>
</comment>
<feature type="signal peptide" evidence="2">
    <location>
        <begin position="1"/>
        <end position="20"/>
    </location>
</feature>
<feature type="chain" id="PRO_0000029314" description="Foldase protein PrsA 2">
    <location>
        <begin position="21"/>
        <end position="293"/>
    </location>
</feature>
<feature type="domain" description="PpiC">
    <location>
        <begin position="135"/>
        <end position="226"/>
    </location>
</feature>
<feature type="lipid moiety-binding region" description="N-palmitoyl cysteine" evidence="2">
    <location>
        <position position="21"/>
    </location>
</feature>
<feature type="lipid moiety-binding region" description="S-diacylglycerol cysteine" evidence="2">
    <location>
        <position position="21"/>
    </location>
</feature>
<accession>Q8Y557</accession>
<gene>
    <name type="primary">prsA2</name>
    <name type="ordered locus">lmo2219</name>
</gene>
<reference key="1">
    <citation type="journal article" date="2001" name="Science">
        <title>Comparative genomics of Listeria species.</title>
        <authorList>
            <person name="Glaser P."/>
            <person name="Frangeul L."/>
            <person name="Buchrieser C."/>
            <person name="Rusniok C."/>
            <person name="Amend A."/>
            <person name="Baquero F."/>
            <person name="Berche P."/>
            <person name="Bloecker H."/>
            <person name="Brandt P."/>
            <person name="Chakraborty T."/>
            <person name="Charbit A."/>
            <person name="Chetouani F."/>
            <person name="Couve E."/>
            <person name="de Daruvar A."/>
            <person name="Dehoux P."/>
            <person name="Domann E."/>
            <person name="Dominguez-Bernal G."/>
            <person name="Duchaud E."/>
            <person name="Durant L."/>
            <person name="Dussurget O."/>
            <person name="Entian K.-D."/>
            <person name="Fsihi H."/>
            <person name="Garcia-del Portillo F."/>
            <person name="Garrido P."/>
            <person name="Gautier L."/>
            <person name="Goebel W."/>
            <person name="Gomez-Lopez N."/>
            <person name="Hain T."/>
            <person name="Hauf J."/>
            <person name="Jackson D."/>
            <person name="Jones L.-M."/>
            <person name="Kaerst U."/>
            <person name="Kreft J."/>
            <person name="Kuhn M."/>
            <person name="Kunst F."/>
            <person name="Kurapkat G."/>
            <person name="Madueno E."/>
            <person name="Maitournam A."/>
            <person name="Mata Vicente J."/>
            <person name="Ng E."/>
            <person name="Nedjari H."/>
            <person name="Nordsiek G."/>
            <person name="Novella S."/>
            <person name="de Pablos B."/>
            <person name="Perez-Diaz J.-C."/>
            <person name="Purcell R."/>
            <person name="Remmel B."/>
            <person name="Rose M."/>
            <person name="Schlueter T."/>
            <person name="Simoes N."/>
            <person name="Tierrez A."/>
            <person name="Vazquez-Boland J.-A."/>
            <person name="Voss H."/>
            <person name="Wehland J."/>
            <person name="Cossart P."/>
        </authorList>
    </citation>
    <scope>NUCLEOTIDE SEQUENCE [LARGE SCALE GENOMIC DNA]</scope>
    <source>
        <strain>ATCC BAA-679 / EGD-e</strain>
    </source>
</reference>